<accession>Q9MUT4</accession>
<dbReference type="EMBL" id="AF166114">
    <property type="protein sequence ID" value="AAF43817.1"/>
    <property type="molecule type" value="Genomic_DNA"/>
</dbReference>
<dbReference type="RefSeq" id="NP_038376.1">
    <property type="nucleotide sequence ID" value="NC_002186.1"/>
</dbReference>
<dbReference type="SMR" id="Q9MUT4"/>
<dbReference type="GeneID" id="800988"/>
<dbReference type="GO" id="GO:0009535">
    <property type="term" value="C:chloroplast thylakoid membrane"/>
    <property type="evidence" value="ECO:0007669"/>
    <property type="project" value="UniProtKB-SubCell"/>
</dbReference>
<dbReference type="GO" id="GO:0045259">
    <property type="term" value="C:proton-transporting ATP synthase complex"/>
    <property type="evidence" value="ECO:0007669"/>
    <property type="project" value="UniProtKB-KW"/>
</dbReference>
<dbReference type="GO" id="GO:0005524">
    <property type="term" value="F:ATP binding"/>
    <property type="evidence" value="ECO:0007669"/>
    <property type="project" value="UniProtKB-UniRule"/>
</dbReference>
<dbReference type="GO" id="GO:0046933">
    <property type="term" value="F:proton-transporting ATP synthase activity, rotational mechanism"/>
    <property type="evidence" value="ECO:0007669"/>
    <property type="project" value="UniProtKB-UniRule"/>
</dbReference>
<dbReference type="CDD" id="cd12152">
    <property type="entry name" value="F1-ATPase_delta"/>
    <property type="match status" value="1"/>
</dbReference>
<dbReference type="Gene3D" id="6.10.140.480">
    <property type="match status" value="1"/>
</dbReference>
<dbReference type="Gene3D" id="2.60.15.10">
    <property type="entry name" value="F0F1 ATP synthase delta/epsilon subunit, N-terminal"/>
    <property type="match status" value="1"/>
</dbReference>
<dbReference type="HAMAP" id="MF_00530">
    <property type="entry name" value="ATP_synth_epsil_bac"/>
    <property type="match status" value="1"/>
</dbReference>
<dbReference type="InterPro" id="IPR001469">
    <property type="entry name" value="ATP_synth_F1_dsu/esu"/>
</dbReference>
<dbReference type="InterPro" id="IPR020546">
    <property type="entry name" value="ATP_synth_F1_dsu/esu_N"/>
</dbReference>
<dbReference type="InterPro" id="IPR036771">
    <property type="entry name" value="ATPsynth_dsu/esu_N"/>
</dbReference>
<dbReference type="NCBIfam" id="TIGR01216">
    <property type="entry name" value="ATP_synt_epsi"/>
    <property type="match status" value="1"/>
</dbReference>
<dbReference type="PANTHER" id="PTHR13822">
    <property type="entry name" value="ATP SYNTHASE DELTA/EPSILON CHAIN"/>
    <property type="match status" value="1"/>
</dbReference>
<dbReference type="PANTHER" id="PTHR13822:SF10">
    <property type="entry name" value="ATP SYNTHASE EPSILON CHAIN, CHLOROPLASTIC"/>
    <property type="match status" value="1"/>
</dbReference>
<dbReference type="Pfam" id="PF02823">
    <property type="entry name" value="ATP-synt_DE_N"/>
    <property type="match status" value="1"/>
</dbReference>
<dbReference type="SUPFAM" id="SSF51344">
    <property type="entry name" value="Epsilon subunit of F1F0-ATP synthase N-terminal domain"/>
    <property type="match status" value="1"/>
</dbReference>
<geneLocation type="chloroplast"/>
<comment type="function">
    <text evidence="1">Produces ATP from ADP in the presence of a proton gradient across the membrane.</text>
</comment>
<comment type="subunit">
    <text evidence="1">F-type ATPases have 2 components, CF(1) - the catalytic core - and CF(0) - the membrane proton channel. CF(1) has five subunits: alpha(3), beta(3), gamma(1), delta(1), epsilon(1). CF(0) has three main subunits: a, b and c.</text>
</comment>
<comment type="subcellular location">
    <subcellularLocation>
        <location evidence="1">Plastid</location>
        <location evidence="1">Chloroplast thylakoid membrane</location>
        <topology evidence="1">Peripheral membrane protein</topology>
    </subcellularLocation>
</comment>
<comment type="similarity">
    <text evidence="1">Belongs to the ATPase epsilon chain family.</text>
</comment>
<proteinExistence type="inferred from homology"/>
<reference key="1">
    <citation type="journal article" date="2000" name="Nature">
        <title>Ancestral chloroplast genome in Mesostigma viride reveals an early branch of green plant evolution.</title>
        <authorList>
            <person name="Lemieux C."/>
            <person name="Otis C."/>
            <person name="Turmel M."/>
        </authorList>
    </citation>
    <scope>NUCLEOTIDE SEQUENCE [LARGE SCALE GENOMIC DNA]</scope>
    <source>
        <strain>NIES-296 / KY-14 / CCMP 2046</strain>
    </source>
</reference>
<sequence>MSFQVRIIAPNGIIWDSEAEEIILSTNTGKIGVLTNHTSLLTGLDIGTIRIRALNNQWNTLALMSGFAVIKDNVATIIVSEAENGANIKSEEAQTQLEEAKSYFNTAKGTKNEVEANLAVKRAETRLKASQNL</sequence>
<evidence type="ECO:0000255" key="1">
    <source>
        <dbReference type="HAMAP-Rule" id="MF_00530"/>
    </source>
</evidence>
<name>ATPE_MESVI</name>
<feature type="chain" id="PRO_0000188275" description="ATP synthase epsilon chain, chloroplastic">
    <location>
        <begin position="1"/>
        <end position="133"/>
    </location>
</feature>
<keyword id="KW-0066">ATP synthesis</keyword>
<keyword id="KW-0139">CF(1)</keyword>
<keyword id="KW-0150">Chloroplast</keyword>
<keyword id="KW-0375">Hydrogen ion transport</keyword>
<keyword id="KW-0406">Ion transport</keyword>
<keyword id="KW-0472">Membrane</keyword>
<keyword id="KW-0934">Plastid</keyword>
<keyword id="KW-0793">Thylakoid</keyword>
<keyword id="KW-0813">Transport</keyword>
<protein>
    <recommendedName>
        <fullName evidence="1">ATP synthase epsilon chain, chloroplastic</fullName>
    </recommendedName>
    <alternativeName>
        <fullName evidence="1">ATP synthase F1 sector epsilon subunit</fullName>
    </alternativeName>
    <alternativeName>
        <fullName evidence="1">F-ATPase epsilon subunit</fullName>
    </alternativeName>
</protein>
<organism>
    <name type="scientific">Mesostigma viride</name>
    <name type="common">Green alga</name>
    <dbReference type="NCBI Taxonomy" id="41882"/>
    <lineage>
        <taxon>Eukaryota</taxon>
        <taxon>Viridiplantae</taxon>
        <taxon>Streptophyta</taxon>
        <taxon>Mesostigmatophyceae</taxon>
        <taxon>Mesostigmatales</taxon>
        <taxon>Mesostigmataceae</taxon>
        <taxon>Mesostigma</taxon>
    </lineage>
</organism>
<gene>
    <name evidence="1" type="primary">atpE</name>
</gene>